<accession>B5ZBS7</accession>
<dbReference type="EMBL" id="CP001184">
    <property type="protein sequence ID" value="ACI60022.1"/>
    <property type="molecule type" value="Genomic_DNA"/>
</dbReference>
<dbReference type="RefSeq" id="WP_004025843.1">
    <property type="nucleotide sequence ID" value="NC_011374.1"/>
</dbReference>
<dbReference type="SMR" id="B5ZBS7"/>
<dbReference type="STRING" id="565575.UUR10_0475"/>
<dbReference type="KEGG" id="uue:UUR10_0475"/>
<dbReference type="eggNOG" id="COG0830">
    <property type="taxonomic scope" value="Bacteria"/>
</dbReference>
<dbReference type="HOGENOM" id="CLU_049215_4_2_14"/>
<dbReference type="OrthoDB" id="9798772at2"/>
<dbReference type="Proteomes" id="UP000002018">
    <property type="component" value="Chromosome"/>
</dbReference>
<dbReference type="GO" id="GO:0005737">
    <property type="term" value="C:cytoplasm"/>
    <property type="evidence" value="ECO:0007669"/>
    <property type="project" value="UniProtKB-SubCell"/>
</dbReference>
<dbReference type="GO" id="GO:0016151">
    <property type="term" value="F:nickel cation binding"/>
    <property type="evidence" value="ECO:0007669"/>
    <property type="project" value="UniProtKB-UniRule"/>
</dbReference>
<dbReference type="Gene3D" id="1.10.4190.10">
    <property type="entry name" value="Urease accessory protein UreF"/>
    <property type="match status" value="1"/>
</dbReference>
<dbReference type="HAMAP" id="MF_01385">
    <property type="entry name" value="UreF"/>
    <property type="match status" value="1"/>
</dbReference>
<dbReference type="InterPro" id="IPR002639">
    <property type="entry name" value="UreF"/>
</dbReference>
<dbReference type="InterPro" id="IPR038277">
    <property type="entry name" value="UreF_sf"/>
</dbReference>
<dbReference type="PANTHER" id="PTHR33620">
    <property type="entry name" value="UREASE ACCESSORY PROTEIN F"/>
    <property type="match status" value="1"/>
</dbReference>
<dbReference type="PANTHER" id="PTHR33620:SF1">
    <property type="entry name" value="UREASE ACCESSORY PROTEIN F"/>
    <property type="match status" value="1"/>
</dbReference>
<dbReference type="Pfam" id="PF01730">
    <property type="entry name" value="UreF"/>
    <property type="match status" value="1"/>
</dbReference>
<dbReference type="PIRSF" id="PIRSF009467">
    <property type="entry name" value="Ureas_acces_UreF"/>
    <property type="match status" value="1"/>
</dbReference>
<reference key="1">
    <citation type="submission" date="2008-10" db="EMBL/GenBank/DDBJ databases">
        <title>Genome sequence of Ureaplasma urealyticum serovar 10 ATCC-33699.</title>
        <authorList>
            <person name="Shrivastava S."/>
            <person name="Methe B.A."/>
            <person name="Glass J."/>
            <person name="White K."/>
            <person name="Duffy L.B."/>
        </authorList>
    </citation>
    <scope>NUCLEOTIDE SEQUENCE [LARGE SCALE GENOMIC DNA]</scope>
    <source>
        <strain>ATCC 33699 / Western</strain>
    </source>
</reference>
<comment type="function">
    <text evidence="1">Required for maturation of urease via the functional incorporation of the urease nickel metallocenter.</text>
</comment>
<comment type="subunit">
    <text evidence="1">UreD, UreF and UreG form a complex that acts as a GTP-hydrolysis-dependent molecular chaperone, activating the urease apoprotein by helping to assemble the nickel containing metallocenter of UreC. The UreE protein probably delivers the nickel.</text>
</comment>
<comment type="subcellular location">
    <subcellularLocation>
        <location evidence="1">Cytoplasm</location>
    </subcellularLocation>
</comment>
<comment type="similarity">
    <text evidence="1">Belongs to the UreF family.</text>
</comment>
<evidence type="ECO:0000255" key="1">
    <source>
        <dbReference type="HAMAP-Rule" id="MF_01385"/>
    </source>
</evidence>
<keyword id="KW-0143">Chaperone</keyword>
<keyword id="KW-0963">Cytoplasm</keyword>
<keyword id="KW-0996">Nickel insertion</keyword>
<gene>
    <name evidence="1" type="primary">ureF</name>
    <name type="ordered locus">UUR10_0475</name>
</gene>
<protein>
    <recommendedName>
        <fullName evidence="1">Urease accessory protein UreF</fullName>
    </recommendedName>
</protein>
<sequence length="235" mass="27209">MMLNSDYLNLLDLMQITNANFPIGTFSHSFGIETYIRKDIVFDGDSLIRALLLYMNEQLLHGDLLAIYQIFKLLPKQKINAIWEIDQMINFQGLARETREGQRRIGQQMVKIYNELFDCELLVEYAQRIKDRKSYGNPAVAFALLAMHLKIDLKTALYTHLYSTVAALTQNCVRAIPLGQVKGQKIIHKLKHVYFDDIIDKVFSLDFKTDFCKNIPGLEIAQMEHEDTPVRLFMS</sequence>
<proteinExistence type="inferred from homology"/>
<name>UREF_UREU1</name>
<feature type="chain" id="PRO_1000145143" description="Urease accessory protein UreF">
    <location>
        <begin position="1"/>
        <end position="235"/>
    </location>
</feature>
<organism>
    <name type="scientific">Ureaplasma urealyticum serovar 10 (strain ATCC 33699 / Western)</name>
    <dbReference type="NCBI Taxonomy" id="565575"/>
    <lineage>
        <taxon>Bacteria</taxon>
        <taxon>Bacillati</taxon>
        <taxon>Mycoplasmatota</taxon>
        <taxon>Mycoplasmoidales</taxon>
        <taxon>Mycoplasmoidaceae</taxon>
        <taxon>Ureaplasma</taxon>
    </lineage>
</organism>